<protein>
    <recommendedName>
        <fullName>Pepsin A-3</fullName>
        <ecNumber>3.4.23.1</ecNumber>
    </recommendedName>
    <alternativeName>
        <fullName>Pepsinogen-3</fullName>
    </alternativeName>
</protein>
<feature type="signal peptide" evidence="3 4">
    <location>
        <begin position="1"/>
        <end position="15"/>
    </location>
</feature>
<feature type="propeptide" id="PRO_0000026013" description="Activation peptide">
    <location>
        <begin position="16"/>
        <end position="62"/>
    </location>
</feature>
<feature type="chain" id="PRO_0000026014" description="Pepsin A-3">
    <location>
        <begin position="63"/>
        <end position="388"/>
    </location>
</feature>
<feature type="domain" description="Peptidase A1" evidence="1">
    <location>
        <begin position="76"/>
        <end position="385"/>
    </location>
</feature>
<feature type="active site" evidence="2 5">
    <location>
        <position position="94"/>
    </location>
</feature>
<feature type="active site" evidence="2 5">
    <location>
        <position position="277"/>
    </location>
</feature>
<feature type="disulfide bond" evidence="5">
    <location>
        <begin position="107"/>
        <end position="112"/>
    </location>
</feature>
<feature type="disulfide bond" evidence="5">
    <location>
        <begin position="268"/>
        <end position="272"/>
    </location>
</feature>
<feature type="disulfide bond" evidence="5">
    <location>
        <begin position="311"/>
        <end position="344"/>
    </location>
</feature>
<feature type="sequence conflict" description="In Ref. 1; BAG35783/BAG54225 and 3; AAI71815." evidence="6" ref="1 3">
    <original>V</original>
    <variation>L</variation>
    <location>
        <position position="92"/>
    </location>
</feature>
<feature type="sequence conflict" description="In Ref. 7; AA sequence." evidence="6" ref="7">
    <original>YF</original>
    <variation>FY</variation>
    <location>
        <begin position="371"/>
        <end position="372"/>
    </location>
</feature>
<accession>P0DJD8</accession>
<accession>A8K749</accession>
<accession>B2R7D6</accession>
<accession>B7ZW75</accession>
<accession>P00790</accession>
<accession>Q7M4R0</accession>
<accession>Q8N1E3</accession>
<evidence type="ECO:0000255" key="1">
    <source>
        <dbReference type="PROSITE-ProRule" id="PRU01103"/>
    </source>
</evidence>
<evidence type="ECO:0000255" key="2">
    <source>
        <dbReference type="PROSITE-ProRule" id="PRU10094"/>
    </source>
</evidence>
<evidence type="ECO:0000269" key="3">
    <source>
    </source>
</evidence>
<evidence type="ECO:0000269" key="4">
    <source>
    </source>
</evidence>
<evidence type="ECO:0000269" key="5">
    <source>
    </source>
</evidence>
<evidence type="ECO:0000305" key="6"/>
<dbReference type="EC" id="3.4.23.1"/>
<dbReference type="EMBL" id="AK312941">
    <property type="protein sequence ID" value="BAG35783.1"/>
    <property type="molecule type" value="mRNA"/>
</dbReference>
<dbReference type="EMBL" id="AK125628">
    <property type="protein sequence ID" value="BAG54225.1"/>
    <property type="molecule type" value="mRNA"/>
</dbReference>
<dbReference type="EMBL" id="AP000437">
    <property type="status" value="NOT_ANNOTATED_CDS"/>
    <property type="molecule type" value="Genomic_DNA"/>
</dbReference>
<dbReference type="EMBL" id="BC171815">
    <property type="protein sequence ID" value="AAI71815.1"/>
    <property type="molecule type" value="mRNA"/>
</dbReference>
<dbReference type="CCDS" id="CCDS31574.1"/>
<dbReference type="PIR" id="A00980">
    <property type="entry name" value="PEHU"/>
</dbReference>
<dbReference type="PIR" id="A30142">
    <property type="entry name" value="A30142"/>
</dbReference>
<dbReference type="PIR" id="A92058">
    <property type="entry name" value="A92058"/>
</dbReference>
<dbReference type="PIR" id="B30142">
    <property type="entry name" value="B30142"/>
</dbReference>
<dbReference type="RefSeq" id="NP_001073275.1">
    <property type="nucleotide sequence ID" value="NM_001079807.4"/>
</dbReference>
<dbReference type="SMR" id="P0DJD8"/>
<dbReference type="BioGRID" id="569090">
    <property type="interactions" value="2"/>
</dbReference>
<dbReference type="FunCoup" id="P0DJD8">
    <property type="interactions" value="102"/>
</dbReference>
<dbReference type="IntAct" id="P0DJD8">
    <property type="interactions" value="2"/>
</dbReference>
<dbReference type="MINT" id="P0DJD8"/>
<dbReference type="STRING" id="9606.ENSP00000322192"/>
<dbReference type="MEROPS" id="A01.001"/>
<dbReference type="GlyGen" id="P0DJD8">
    <property type="glycosylation" value="1 site"/>
</dbReference>
<dbReference type="iPTMnet" id="P0DJD8"/>
<dbReference type="PhosphoSitePlus" id="P0DJD8"/>
<dbReference type="BioMuta" id="PGA3"/>
<dbReference type="DMDM" id="378521956"/>
<dbReference type="MassIVE" id="P0DJD8"/>
<dbReference type="PaxDb" id="9606-ENSP00000322192"/>
<dbReference type="PeptideAtlas" id="P0DJD8"/>
<dbReference type="ProteomicsDB" id="52545"/>
<dbReference type="Antibodypedia" id="28068">
    <property type="antibodies" value="192 antibodies from 19 providers"/>
</dbReference>
<dbReference type="DNASU" id="643834"/>
<dbReference type="Ensembl" id="ENST00000325558.11">
    <property type="protein sequence ID" value="ENSP00000322192.6"/>
    <property type="gene ID" value="ENSG00000229859.10"/>
</dbReference>
<dbReference type="GeneID" id="643834"/>
<dbReference type="KEGG" id="hsa:643834"/>
<dbReference type="MANE-Select" id="ENST00000325558.11">
    <property type="protein sequence ID" value="ENSP00000322192.6"/>
    <property type="RefSeq nucleotide sequence ID" value="NM_001079807.4"/>
    <property type="RefSeq protein sequence ID" value="NP_001073275.1"/>
</dbReference>
<dbReference type="UCSC" id="uc001nqx.4">
    <property type="organism name" value="human"/>
</dbReference>
<dbReference type="AGR" id="HGNC:8885"/>
<dbReference type="CTD" id="643834"/>
<dbReference type="DisGeNET" id="643834"/>
<dbReference type="GeneCards" id="PGA3"/>
<dbReference type="HGNC" id="HGNC:8885">
    <property type="gene designation" value="PGA3"/>
</dbReference>
<dbReference type="HPA" id="ENSG00000229859">
    <property type="expression patterns" value="Tissue enriched (stomach)"/>
</dbReference>
<dbReference type="MIM" id="169700">
    <property type="type" value="gene"/>
</dbReference>
<dbReference type="MIM" id="169710">
    <property type="type" value="gene"/>
</dbReference>
<dbReference type="neXtProt" id="NX_P0DJD8"/>
<dbReference type="OpenTargets" id="ENSG00000229859"/>
<dbReference type="VEuPathDB" id="HostDB:ENSG00000229859"/>
<dbReference type="eggNOG" id="KOG1339">
    <property type="taxonomic scope" value="Eukaryota"/>
</dbReference>
<dbReference type="GeneTree" id="ENSGT00940000155036"/>
<dbReference type="HOGENOM" id="CLU_013253_3_0_1"/>
<dbReference type="InParanoid" id="P0DJD8"/>
<dbReference type="OMA" id="MIQADNI"/>
<dbReference type="OrthoDB" id="9528103at2759"/>
<dbReference type="PAN-GO" id="P0DJD8">
    <property type="GO annotations" value="2 GO annotations based on evolutionary models"/>
</dbReference>
<dbReference type="PhylomeDB" id="P0DJD8"/>
<dbReference type="TreeFam" id="TF314990"/>
<dbReference type="PathwayCommons" id="P0DJD8"/>
<dbReference type="Reactome" id="R-HSA-5683826">
    <property type="pathway name" value="Surfactant metabolism"/>
</dbReference>
<dbReference type="BioGRID-ORCS" id="643834">
    <property type="hits" value="18 hits in 681 CRISPR screens"/>
</dbReference>
<dbReference type="ChiTaRS" id="PGA3">
    <property type="organism name" value="human"/>
</dbReference>
<dbReference type="GenomeRNAi" id="643834"/>
<dbReference type="Pharos" id="P0DJD8">
    <property type="development level" value="Tbio"/>
</dbReference>
<dbReference type="PRO" id="PR:P0DJD8"/>
<dbReference type="Proteomes" id="UP000005640">
    <property type="component" value="Chromosome 11"/>
</dbReference>
<dbReference type="RNAct" id="P0DJD8">
    <property type="molecule type" value="protein"/>
</dbReference>
<dbReference type="Bgee" id="ENSG00000229859">
    <property type="expression patterns" value="Expressed in body of stomach and 90 other cell types or tissues"/>
</dbReference>
<dbReference type="ExpressionAtlas" id="P0DJD8">
    <property type="expression patterns" value="baseline and differential"/>
</dbReference>
<dbReference type="GO" id="GO:0070062">
    <property type="term" value="C:extracellular exosome"/>
    <property type="evidence" value="ECO:0007005"/>
    <property type="project" value="UniProtKB"/>
</dbReference>
<dbReference type="GO" id="GO:0097486">
    <property type="term" value="C:multivesicular body lumen"/>
    <property type="evidence" value="ECO:0000304"/>
    <property type="project" value="Reactome"/>
</dbReference>
<dbReference type="GO" id="GO:0004190">
    <property type="term" value="F:aspartic-type endopeptidase activity"/>
    <property type="evidence" value="ECO:0000318"/>
    <property type="project" value="GO_Central"/>
</dbReference>
<dbReference type="GO" id="GO:0007586">
    <property type="term" value="P:digestion"/>
    <property type="evidence" value="ECO:0007669"/>
    <property type="project" value="UniProtKB-KW"/>
</dbReference>
<dbReference type="GO" id="GO:0006508">
    <property type="term" value="P:proteolysis"/>
    <property type="evidence" value="ECO:0000318"/>
    <property type="project" value="GO_Central"/>
</dbReference>
<dbReference type="CDD" id="cd05478">
    <property type="entry name" value="pepsin_A"/>
    <property type="match status" value="1"/>
</dbReference>
<dbReference type="FunFam" id="2.40.70.10:FF:000006">
    <property type="entry name" value="Cathepsin E"/>
    <property type="match status" value="1"/>
</dbReference>
<dbReference type="FunFam" id="2.40.70.10:FF:000004">
    <property type="entry name" value="Pepsin A"/>
    <property type="match status" value="1"/>
</dbReference>
<dbReference type="Gene3D" id="6.10.140.60">
    <property type="match status" value="1"/>
</dbReference>
<dbReference type="Gene3D" id="2.40.70.10">
    <property type="entry name" value="Acid Proteases"/>
    <property type="match status" value="2"/>
</dbReference>
<dbReference type="InterPro" id="IPR001461">
    <property type="entry name" value="Aspartic_peptidase_A1"/>
</dbReference>
<dbReference type="InterPro" id="IPR001969">
    <property type="entry name" value="Aspartic_peptidase_AS"/>
</dbReference>
<dbReference type="InterPro" id="IPR012848">
    <property type="entry name" value="Aspartic_peptidase_N"/>
</dbReference>
<dbReference type="InterPro" id="IPR034162">
    <property type="entry name" value="Pepsin_A"/>
</dbReference>
<dbReference type="InterPro" id="IPR033121">
    <property type="entry name" value="PEPTIDASE_A1"/>
</dbReference>
<dbReference type="InterPro" id="IPR021109">
    <property type="entry name" value="Peptidase_aspartic_dom_sf"/>
</dbReference>
<dbReference type="PANTHER" id="PTHR47966">
    <property type="entry name" value="BETA-SITE APP-CLEAVING ENZYME, ISOFORM A-RELATED"/>
    <property type="match status" value="1"/>
</dbReference>
<dbReference type="PANTHER" id="PTHR47966:SF22">
    <property type="entry name" value="PEPSIN A-3-RELATED"/>
    <property type="match status" value="1"/>
</dbReference>
<dbReference type="Pfam" id="PF07966">
    <property type="entry name" value="A1_Propeptide"/>
    <property type="match status" value="1"/>
</dbReference>
<dbReference type="Pfam" id="PF00026">
    <property type="entry name" value="Asp"/>
    <property type="match status" value="1"/>
</dbReference>
<dbReference type="PRINTS" id="PR00792">
    <property type="entry name" value="PEPSIN"/>
</dbReference>
<dbReference type="SUPFAM" id="SSF50630">
    <property type="entry name" value="Acid proteases"/>
    <property type="match status" value="1"/>
</dbReference>
<dbReference type="PROSITE" id="PS00141">
    <property type="entry name" value="ASP_PROTEASE"/>
    <property type="match status" value="2"/>
</dbReference>
<dbReference type="PROSITE" id="PS51767">
    <property type="entry name" value="PEPTIDASE_A1"/>
    <property type="match status" value="1"/>
</dbReference>
<organism>
    <name type="scientific">Homo sapiens</name>
    <name type="common">Human</name>
    <dbReference type="NCBI Taxonomy" id="9606"/>
    <lineage>
        <taxon>Eukaryota</taxon>
        <taxon>Metazoa</taxon>
        <taxon>Chordata</taxon>
        <taxon>Craniata</taxon>
        <taxon>Vertebrata</taxon>
        <taxon>Euteleostomi</taxon>
        <taxon>Mammalia</taxon>
        <taxon>Eutheria</taxon>
        <taxon>Euarchontoglires</taxon>
        <taxon>Primates</taxon>
        <taxon>Haplorrhini</taxon>
        <taxon>Catarrhini</taxon>
        <taxon>Hominidae</taxon>
        <taxon>Homo</taxon>
    </lineage>
</organism>
<name>PEPA3_HUMAN</name>
<sequence>MKWLLLLGLVALSECIMYKVPLIRKKSLRRTLSERGLLKDFLKKHNLNPARKYFPQWKAPTLVDEQPLENYLDMEYFGTIGIGTPAQDFTVVFDTGSSNLWVPSVYCSSLACTNHNRFNPEDSSTYQSTSETVSITYGTGSMTGILGYDTVQVGGISDTNQIFGLSETEPGSFLYYAPFDGILGLAYPSISSSGATPVFDNIWNQGLVSQDLFSVYLSADDQSGSVVIFGGIDSSYYTGSLNWVPVTVEGYWQITVDSITMNGEAIACAEGCQAIVDTGTSLLTGPTSPIANIQSDIGASENSDGDMVVSCSAISSLPDIVFTINGVQYPVPPSAYILQSEGSCISGFQGMNLPTESGELWILGDVFIRQYFTVFDRANNQVGLAPVA</sequence>
<reference key="1">
    <citation type="journal article" date="2004" name="Nat. Genet.">
        <title>Complete sequencing and characterization of 21,243 full-length human cDNAs.</title>
        <authorList>
            <person name="Ota T."/>
            <person name="Suzuki Y."/>
            <person name="Nishikawa T."/>
            <person name="Otsuki T."/>
            <person name="Sugiyama T."/>
            <person name="Irie R."/>
            <person name="Wakamatsu A."/>
            <person name="Hayashi K."/>
            <person name="Sato H."/>
            <person name="Nagai K."/>
            <person name="Kimura K."/>
            <person name="Makita H."/>
            <person name="Sekine M."/>
            <person name="Obayashi M."/>
            <person name="Nishi T."/>
            <person name="Shibahara T."/>
            <person name="Tanaka T."/>
            <person name="Ishii S."/>
            <person name="Yamamoto J."/>
            <person name="Saito K."/>
            <person name="Kawai Y."/>
            <person name="Isono Y."/>
            <person name="Nakamura Y."/>
            <person name="Nagahari K."/>
            <person name="Murakami K."/>
            <person name="Yasuda T."/>
            <person name="Iwayanagi T."/>
            <person name="Wagatsuma M."/>
            <person name="Shiratori A."/>
            <person name="Sudo H."/>
            <person name="Hosoiri T."/>
            <person name="Kaku Y."/>
            <person name="Kodaira H."/>
            <person name="Kondo H."/>
            <person name="Sugawara M."/>
            <person name="Takahashi M."/>
            <person name="Kanda K."/>
            <person name="Yokoi T."/>
            <person name="Furuya T."/>
            <person name="Kikkawa E."/>
            <person name="Omura Y."/>
            <person name="Abe K."/>
            <person name="Kamihara K."/>
            <person name="Katsuta N."/>
            <person name="Sato K."/>
            <person name="Tanikawa M."/>
            <person name="Yamazaki M."/>
            <person name="Ninomiya K."/>
            <person name="Ishibashi T."/>
            <person name="Yamashita H."/>
            <person name="Murakawa K."/>
            <person name="Fujimori K."/>
            <person name="Tanai H."/>
            <person name="Kimata M."/>
            <person name="Watanabe M."/>
            <person name="Hiraoka S."/>
            <person name="Chiba Y."/>
            <person name="Ishida S."/>
            <person name="Ono Y."/>
            <person name="Takiguchi S."/>
            <person name="Watanabe S."/>
            <person name="Yosida M."/>
            <person name="Hotuta T."/>
            <person name="Kusano J."/>
            <person name="Kanehori K."/>
            <person name="Takahashi-Fujii A."/>
            <person name="Hara H."/>
            <person name="Tanase T.-O."/>
            <person name="Nomura Y."/>
            <person name="Togiya S."/>
            <person name="Komai F."/>
            <person name="Hara R."/>
            <person name="Takeuchi K."/>
            <person name="Arita M."/>
            <person name="Imose N."/>
            <person name="Musashino K."/>
            <person name="Yuuki H."/>
            <person name="Oshima A."/>
            <person name="Sasaki N."/>
            <person name="Aotsuka S."/>
            <person name="Yoshikawa Y."/>
            <person name="Matsunawa H."/>
            <person name="Ichihara T."/>
            <person name="Shiohata N."/>
            <person name="Sano S."/>
            <person name="Moriya S."/>
            <person name="Momiyama H."/>
            <person name="Satoh N."/>
            <person name="Takami S."/>
            <person name="Terashima Y."/>
            <person name="Suzuki O."/>
            <person name="Nakagawa S."/>
            <person name="Senoh A."/>
            <person name="Mizoguchi H."/>
            <person name="Goto Y."/>
            <person name="Shimizu F."/>
            <person name="Wakebe H."/>
            <person name="Hishigaki H."/>
            <person name="Watanabe T."/>
            <person name="Sugiyama A."/>
            <person name="Takemoto M."/>
            <person name="Kawakami B."/>
            <person name="Yamazaki M."/>
            <person name="Watanabe K."/>
            <person name="Kumagai A."/>
            <person name="Itakura S."/>
            <person name="Fukuzumi Y."/>
            <person name="Fujimori Y."/>
            <person name="Komiyama M."/>
            <person name="Tashiro H."/>
            <person name="Tanigami A."/>
            <person name="Fujiwara T."/>
            <person name="Ono T."/>
            <person name="Yamada K."/>
            <person name="Fujii Y."/>
            <person name="Ozaki K."/>
            <person name="Hirao M."/>
            <person name="Ohmori Y."/>
            <person name="Kawabata A."/>
            <person name="Hikiji T."/>
            <person name="Kobatake N."/>
            <person name="Inagaki H."/>
            <person name="Ikema Y."/>
            <person name="Okamoto S."/>
            <person name="Okitani R."/>
            <person name="Kawakami T."/>
            <person name="Noguchi S."/>
            <person name="Itoh T."/>
            <person name="Shigeta K."/>
            <person name="Senba T."/>
            <person name="Matsumura K."/>
            <person name="Nakajima Y."/>
            <person name="Mizuno T."/>
            <person name="Morinaga M."/>
            <person name="Sasaki M."/>
            <person name="Togashi T."/>
            <person name="Oyama M."/>
            <person name="Hata H."/>
            <person name="Watanabe M."/>
            <person name="Komatsu T."/>
            <person name="Mizushima-Sugano J."/>
            <person name="Satoh T."/>
            <person name="Shirai Y."/>
            <person name="Takahashi Y."/>
            <person name="Nakagawa K."/>
            <person name="Okumura K."/>
            <person name="Nagase T."/>
            <person name="Nomura N."/>
            <person name="Kikuchi H."/>
            <person name="Masuho Y."/>
            <person name="Yamashita R."/>
            <person name="Nakai K."/>
            <person name="Yada T."/>
            <person name="Nakamura Y."/>
            <person name="Ohara O."/>
            <person name="Isogai T."/>
            <person name="Sugano S."/>
        </authorList>
    </citation>
    <scope>NUCLEOTIDE SEQUENCE [LARGE SCALE MRNA]</scope>
    <source>
        <tissue>Stomach</tissue>
    </source>
</reference>
<reference key="2">
    <citation type="journal article" date="2006" name="Nature">
        <title>Human chromosome 11 DNA sequence and analysis including novel gene identification.</title>
        <authorList>
            <person name="Taylor T.D."/>
            <person name="Noguchi H."/>
            <person name="Totoki Y."/>
            <person name="Toyoda A."/>
            <person name="Kuroki Y."/>
            <person name="Dewar K."/>
            <person name="Lloyd C."/>
            <person name="Itoh T."/>
            <person name="Takeda T."/>
            <person name="Kim D.-W."/>
            <person name="She X."/>
            <person name="Barlow K.F."/>
            <person name="Bloom T."/>
            <person name="Bruford E."/>
            <person name="Chang J.L."/>
            <person name="Cuomo C.A."/>
            <person name="Eichler E."/>
            <person name="FitzGerald M.G."/>
            <person name="Jaffe D.B."/>
            <person name="LaButti K."/>
            <person name="Nicol R."/>
            <person name="Park H.-S."/>
            <person name="Seaman C."/>
            <person name="Sougnez C."/>
            <person name="Yang X."/>
            <person name="Zimmer A.R."/>
            <person name="Zody M.C."/>
            <person name="Birren B.W."/>
            <person name="Nusbaum C."/>
            <person name="Fujiyama A."/>
            <person name="Hattori M."/>
            <person name="Rogers J."/>
            <person name="Lander E.S."/>
            <person name="Sakaki Y."/>
        </authorList>
    </citation>
    <scope>NUCLEOTIDE SEQUENCE [LARGE SCALE GENOMIC DNA]</scope>
</reference>
<reference key="3">
    <citation type="journal article" date="2004" name="Genome Res.">
        <title>The status, quality, and expansion of the NIH full-length cDNA project: the Mammalian Gene Collection (MGC).</title>
        <authorList>
            <consortium name="The MGC Project Team"/>
        </authorList>
    </citation>
    <scope>NUCLEOTIDE SEQUENCE [LARGE SCALE MRNA]</scope>
    <source>
        <tissue>Brain</tissue>
    </source>
</reference>
<reference key="4">
    <citation type="journal article" date="1985" name="J. Biochem.">
        <title>Isolation of human, swine, and rat prepepsinogens and calf preprochymosin, and determination of the primary structures of their NH2-terminal signal sequences.</title>
        <authorList>
            <person name="Ichihara Y."/>
            <person name="Sogawa K."/>
            <person name="Takahashi K."/>
        </authorList>
    </citation>
    <scope>PARTIAL PROTEIN SEQUENCE OF 1-28</scope>
</reference>
<reference key="5">
    <citation type="journal article" date="1989" name="J. Biochem.">
        <title>A comparative study on the NH2-terminal amino acid sequences and some other properties of six isozymic forms of human pepsinogens and pepsins.</title>
        <authorList>
            <person name="Athauda S.B.P."/>
            <person name="Tanji M."/>
            <person name="Kageyama T."/>
            <person name="Takahashi K."/>
        </authorList>
    </citation>
    <scope>PROTEIN SEQUENCE OF 16-100</scope>
</reference>
<reference key="6">
    <citation type="journal article" date="1988" name="FEBS Lett.">
        <title>Activation of human pepsinogens.</title>
        <authorList>
            <person name="Foltmann B."/>
        </authorList>
    </citation>
    <scope>PROTEIN SEQUENCE OF 16-68</scope>
</reference>
<reference key="7">
    <citation type="journal article" date="1970" name="J. Biol. Chem.">
        <title>Carboxyl-terminal sequence of human gastricsin and pepsin.</title>
        <authorList>
            <person name="Huang W.-Y."/>
            <person name="Tang J."/>
        </authorList>
    </citation>
    <scope>PROTEIN SEQUENCE OF 362-388</scope>
</reference>
<reference key="8">
    <citation type="journal article" date="1983" name="J. Biol. Chem.">
        <title>Primary structure of human pepsinogen gene.</title>
        <authorList>
            <person name="Sogawa K."/>
            <person name="Fujii-Kuriyama Y."/>
            <person name="Mizukami Y."/>
            <person name="Ichihara Y."/>
            <person name="Takahashi K."/>
        </authorList>
    </citation>
    <scope>IDENTIFICATION</scope>
</reference>
<reference key="9">
    <citation type="journal article" date="1989" name="Genomics">
        <title>Nucleotide sequence comparison of five human pepsinogen A (PGA) genes: evolution of the PGA multigene family.</title>
        <authorList>
            <person name="Evers M.P.J."/>
            <person name="Zelle B."/>
            <person name="Bebelman J.-P."/>
            <person name="van Beusechem V."/>
            <person name="Kraakman L."/>
            <person name="Hoffer M.J.V."/>
            <person name="Pronk J.C."/>
            <person name="Mager W.H."/>
            <person name="Planta R.J."/>
            <person name="Eriksson A.W."/>
            <person name="Frants R.R."/>
        </authorList>
    </citation>
    <scope>IDENTIFICATION</scope>
    <source>
        <tissue>Placenta</tissue>
    </source>
</reference>
<reference key="10">
    <citation type="journal article" date="1995" name="Protein Sci.">
        <title>Crystal structure of human pepsin and its complex with pepstatin.</title>
        <authorList>
            <person name="Fujinaga M."/>
            <person name="Chernaia M.M."/>
            <person name="Tarasova N.I."/>
            <person name="Mosimann S.C."/>
            <person name="James M.N.G."/>
        </authorList>
    </citation>
    <scope>X-RAY CRYSTALLOGRAPHY (2.2 ANGSTROMS) OF 63-388</scope>
    <scope>ACTIVE SITES</scope>
    <scope>DISULFIDE BONDS</scope>
</reference>
<keyword id="KW-0064">Aspartyl protease</keyword>
<keyword id="KW-0222">Digestion</keyword>
<keyword id="KW-0903">Direct protein sequencing</keyword>
<keyword id="KW-1015">Disulfide bond</keyword>
<keyword id="KW-0378">Hydrolase</keyword>
<keyword id="KW-0645">Protease</keyword>
<keyword id="KW-1267">Proteomics identification</keyword>
<keyword id="KW-1185">Reference proteome</keyword>
<keyword id="KW-0964">Secreted</keyword>
<keyword id="KW-0732">Signal</keyword>
<keyword id="KW-0865">Zymogen</keyword>
<proteinExistence type="evidence at protein level"/>
<gene>
    <name type="primary">PGA3</name>
</gene>
<comment type="function">
    <text>Shows particularly broad specificity; although bonds involving phenylalanine and leucine are preferred, many others are also cleaved to some extent.</text>
</comment>
<comment type="catalytic activity">
    <reaction evidence="2">
        <text>Preferential cleavage: hydrophobic, preferably aromatic, residues in P1 and P1' positions. Cleaves 1-Phe-|-Val-2, 4-Gln-|-His-5, 13-Glu-|-Ala-14, 14-Ala-|-Leu-15, 15-Leu-|-Tyr-16, 16-Tyr-|-Leu-17, 23-Gly-|-Phe-24, 24-Phe-|-Phe-25 and 25-Phe-|-Tyr-26 bonds in the B chain of insulin.</text>
        <dbReference type="EC" id="3.4.23.1"/>
    </reaction>
</comment>
<comment type="subcellular location">
    <subcellularLocation>
        <location>Secreted</location>
    </subcellularLocation>
</comment>
<comment type="similarity">
    <text evidence="6">Belongs to the peptidase A1 family.</text>
</comment>